<sequence length="121" mass="13754">MNLIQQLEQEEIARLNKDIPEFAPGDTVVVSVRVVEGTRSRLQAYEGVVIARRNRGLNSNFIVRKISSGEGVERTFQLYSPTVEKIEVKRRGDVRRAKLYYLRGLTGKAARIKEKLPARKG</sequence>
<organism>
    <name type="scientific">Neisseria meningitidis serogroup C (strain 053442)</name>
    <dbReference type="NCBI Taxonomy" id="374833"/>
    <lineage>
        <taxon>Bacteria</taxon>
        <taxon>Pseudomonadati</taxon>
        <taxon>Pseudomonadota</taxon>
        <taxon>Betaproteobacteria</taxon>
        <taxon>Neisseriales</taxon>
        <taxon>Neisseriaceae</taxon>
        <taxon>Neisseria</taxon>
    </lineage>
</organism>
<proteinExistence type="inferred from homology"/>
<dbReference type="EMBL" id="CP000381">
    <property type="protein sequence ID" value="ABX72734.1"/>
    <property type="molecule type" value="Genomic_DNA"/>
</dbReference>
<dbReference type="RefSeq" id="WP_002214322.1">
    <property type="nucleotide sequence ID" value="NC_010120.1"/>
</dbReference>
<dbReference type="SMR" id="A9M2D0"/>
<dbReference type="GeneID" id="93386581"/>
<dbReference type="KEGG" id="nmn:NMCC_0535"/>
<dbReference type="HOGENOM" id="CLU_103507_2_1_4"/>
<dbReference type="Proteomes" id="UP000001177">
    <property type="component" value="Chromosome"/>
</dbReference>
<dbReference type="GO" id="GO:0022625">
    <property type="term" value="C:cytosolic large ribosomal subunit"/>
    <property type="evidence" value="ECO:0007669"/>
    <property type="project" value="TreeGrafter"/>
</dbReference>
<dbReference type="GO" id="GO:0003735">
    <property type="term" value="F:structural constituent of ribosome"/>
    <property type="evidence" value="ECO:0007669"/>
    <property type="project" value="InterPro"/>
</dbReference>
<dbReference type="GO" id="GO:0006412">
    <property type="term" value="P:translation"/>
    <property type="evidence" value="ECO:0007669"/>
    <property type="project" value="UniProtKB-UniRule"/>
</dbReference>
<dbReference type="FunFam" id="2.30.30.790:FF:000001">
    <property type="entry name" value="50S ribosomal protein L19"/>
    <property type="match status" value="1"/>
</dbReference>
<dbReference type="Gene3D" id="2.30.30.790">
    <property type="match status" value="1"/>
</dbReference>
<dbReference type="HAMAP" id="MF_00402">
    <property type="entry name" value="Ribosomal_bL19"/>
    <property type="match status" value="1"/>
</dbReference>
<dbReference type="InterPro" id="IPR001857">
    <property type="entry name" value="Ribosomal_bL19"/>
</dbReference>
<dbReference type="InterPro" id="IPR018257">
    <property type="entry name" value="Ribosomal_bL19_CS"/>
</dbReference>
<dbReference type="InterPro" id="IPR038657">
    <property type="entry name" value="Ribosomal_bL19_sf"/>
</dbReference>
<dbReference type="InterPro" id="IPR008991">
    <property type="entry name" value="Translation_prot_SH3-like_sf"/>
</dbReference>
<dbReference type="NCBIfam" id="TIGR01024">
    <property type="entry name" value="rplS_bact"/>
    <property type="match status" value="1"/>
</dbReference>
<dbReference type="PANTHER" id="PTHR15680:SF9">
    <property type="entry name" value="LARGE RIBOSOMAL SUBUNIT PROTEIN BL19M"/>
    <property type="match status" value="1"/>
</dbReference>
<dbReference type="PANTHER" id="PTHR15680">
    <property type="entry name" value="RIBOSOMAL PROTEIN L19"/>
    <property type="match status" value="1"/>
</dbReference>
<dbReference type="Pfam" id="PF01245">
    <property type="entry name" value="Ribosomal_L19"/>
    <property type="match status" value="1"/>
</dbReference>
<dbReference type="PIRSF" id="PIRSF002191">
    <property type="entry name" value="Ribosomal_L19"/>
    <property type="match status" value="1"/>
</dbReference>
<dbReference type="PRINTS" id="PR00061">
    <property type="entry name" value="RIBOSOMALL19"/>
</dbReference>
<dbReference type="SUPFAM" id="SSF50104">
    <property type="entry name" value="Translation proteins SH3-like domain"/>
    <property type="match status" value="1"/>
</dbReference>
<dbReference type="PROSITE" id="PS01015">
    <property type="entry name" value="RIBOSOMAL_L19"/>
    <property type="match status" value="1"/>
</dbReference>
<feature type="chain" id="PRO_1000080360" description="Large ribosomal subunit protein bL19">
    <location>
        <begin position="1"/>
        <end position="121"/>
    </location>
</feature>
<gene>
    <name evidence="1" type="primary">rplS</name>
    <name type="ordered locus">NMCC_0535</name>
</gene>
<evidence type="ECO:0000255" key="1">
    <source>
        <dbReference type="HAMAP-Rule" id="MF_00402"/>
    </source>
</evidence>
<evidence type="ECO:0000305" key="2"/>
<name>RL19_NEIM0</name>
<accession>A9M2D0</accession>
<reference key="1">
    <citation type="journal article" date="2008" name="Genomics">
        <title>Characterization of ST-4821 complex, a unique Neisseria meningitidis clone.</title>
        <authorList>
            <person name="Peng J."/>
            <person name="Yang L."/>
            <person name="Yang F."/>
            <person name="Yang J."/>
            <person name="Yan Y."/>
            <person name="Nie H."/>
            <person name="Zhang X."/>
            <person name="Xiong Z."/>
            <person name="Jiang Y."/>
            <person name="Cheng F."/>
            <person name="Xu X."/>
            <person name="Chen S."/>
            <person name="Sun L."/>
            <person name="Li W."/>
            <person name="Shen Y."/>
            <person name="Shao Z."/>
            <person name="Liang X."/>
            <person name="Xu J."/>
            <person name="Jin Q."/>
        </authorList>
    </citation>
    <scope>NUCLEOTIDE SEQUENCE [LARGE SCALE GENOMIC DNA]</scope>
    <source>
        <strain>053442</strain>
    </source>
</reference>
<keyword id="KW-0687">Ribonucleoprotein</keyword>
<keyword id="KW-0689">Ribosomal protein</keyword>
<protein>
    <recommendedName>
        <fullName evidence="1">Large ribosomal subunit protein bL19</fullName>
    </recommendedName>
    <alternativeName>
        <fullName evidence="2">50S ribosomal protein L19</fullName>
    </alternativeName>
</protein>
<comment type="function">
    <text evidence="1">This protein is located at the 30S-50S ribosomal subunit interface and may play a role in the structure and function of the aminoacyl-tRNA binding site.</text>
</comment>
<comment type="similarity">
    <text evidence="1">Belongs to the bacterial ribosomal protein bL19 family.</text>
</comment>